<accession>Q7V0T8</accession>
<keyword id="KW-0030">Aminoacyl-tRNA synthetase</keyword>
<keyword id="KW-0067">ATP-binding</keyword>
<keyword id="KW-0963">Cytoplasm</keyword>
<keyword id="KW-0436">Ligase</keyword>
<keyword id="KW-0547">Nucleotide-binding</keyword>
<keyword id="KW-0648">Protein biosynthesis</keyword>
<protein>
    <recommendedName>
        <fullName evidence="1">Glycine--tRNA ligase alpha subunit</fullName>
        <ecNumber evidence="1">6.1.1.14</ecNumber>
    </recommendedName>
    <alternativeName>
        <fullName evidence="1">Glycyl-tRNA synthetase alpha subunit</fullName>
        <shortName evidence="1">GlyRS</shortName>
    </alternativeName>
</protein>
<organism>
    <name type="scientific">Prochlorococcus marinus subsp. pastoris (strain CCMP1986 / NIES-2087 / MED4)</name>
    <dbReference type="NCBI Taxonomy" id="59919"/>
    <lineage>
        <taxon>Bacteria</taxon>
        <taxon>Bacillati</taxon>
        <taxon>Cyanobacteriota</taxon>
        <taxon>Cyanophyceae</taxon>
        <taxon>Synechococcales</taxon>
        <taxon>Prochlorococcaceae</taxon>
        <taxon>Prochlorococcus</taxon>
    </lineage>
</organism>
<sequence length="289" mass="33890">MYFQDIIQNLNKFWSEEGCLIMQPYDTEKGAGTMNPHTFLRAIGPEPWSVAYAEPCRRPTDGRFGDNPNRAQHYFQYQVIIKPSPDEIQEKYLTSLEFLGINPKDHDIRFVEDNWESPTLGAWGVGWEVWLDGMEVTQFTYFQQCGGIDCNPIPIEITYGLERIAMFLQDKESIWDLNWNKDINYSDIWLQFEKNQCSFNFSNSNPENMRKLFAIYQEEANSLIEKDLTYPALDFVLKCSHCFNLLDARGVISVTDRAQYIEKIRKLAREVATSWIKERELMNFPLVKK</sequence>
<name>SYGA_PROMP</name>
<feature type="chain" id="PRO_1000047464" description="Glycine--tRNA ligase alpha subunit">
    <location>
        <begin position="1"/>
        <end position="289"/>
    </location>
</feature>
<reference key="1">
    <citation type="journal article" date="2003" name="Nature">
        <title>Genome divergence in two Prochlorococcus ecotypes reflects oceanic niche differentiation.</title>
        <authorList>
            <person name="Rocap G."/>
            <person name="Larimer F.W."/>
            <person name="Lamerdin J.E."/>
            <person name="Malfatti S."/>
            <person name="Chain P."/>
            <person name="Ahlgren N.A."/>
            <person name="Arellano A."/>
            <person name="Coleman M."/>
            <person name="Hauser L."/>
            <person name="Hess W.R."/>
            <person name="Johnson Z.I."/>
            <person name="Land M.L."/>
            <person name="Lindell D."/>
            <person name="Post A.F."/>
            <person name="Regala W."/>
            <person name="Shah M."/>
            <person name="Shaw S.L."/>
            <person name="Steglich C."/>
            <person name="Sullivan M.B."/>
            <person name="Ting C.S."/>
            <person name="Tolonen A."/>
            <person name="Webb E.A."/>
            <person name="Zinser E.R."/>
            <person name="Chisholm S.W."/>
        </authorList>
    </citation>
    <scope>NUCLEOTIDE SEQUENCE [LARGE SCALE GENOMIC DNA]</scope>
    <source>
        <strain>CCMP1986 / NIES-2087 / MED4</strain>
    </source>
</reference>
<dbReference type="EC" id="6.1.1.14" evidence="1"/>
<dbReference type="EMBL" id="BX548174">
    <property type="protein sequence ID" value="CAE19624.1"/>
    <property type="molecule type" value="Genomic_DNA"/>
</dbReference>
<dbReference type="RefSeq" id="WP_011132799.1">
    <property type="nucleotide sequence ID" value="NC_005072.1"/>
</dbReference>
<dbReference type="SMR" id="Q7V0T8"/>
<dbReference type="STRING" id="59919.PMM1165"/>
<dbReference type="KEGG" id="pmm:PMM1165"/>
<dbReference type="eggNOG" id="COG0752">
    <property type="taxonomic scope" value="Bacteria"/>
</dbReference>
<dbReference type="HOGENOM" id="CLU_057066_1_0_3"/>
<dbReference type="OrthoDB" id="9802183at2"/>
<dbReference type="Proteomes" id="UP000001026">
    <property type="component" value="Chromosome"/>
</dbReference>
<dbReference type="GO" id="GO:0005829">
    <property type="term" value="C:cytosol"/>
    <property type="evidence" value="ECO:0007669"/>
    <property type="project" value="TreeGrafter"/>
</dbReference>
<dbReference type="GO" id="GO:0005524">
    <property type="term" value="F:ATP binding"/>
    <property type="evidence" value="ECO:0007669"/>
    <property type="project" value="UniProtKB-UniRule"/>
</dbReference>
<dbReference type="GO" id="GO:0004820">
    <property type="term" value="F:glycine-tRNA ligase activity"/>
    <property type="evidence" value="ECO:0007669"/>
    <property type="project" value="UniProtKB-UniRule"/>
</dbReference>
<dbReference type="GO" id="GO:0006426">
    <property type="term" value="P:glycyl-tRNA aminoacylation"/>
    <property type="evidence" value="ECO:0007669"/>
    <property type="project" value="UniProtKB-UniRule"/>
</dbReference>
<dbReference type="CDD" id="cd00733">
    <property type="entry name" value="GlyRS_alpha_core"/>
    <property type="match status" value="1"/>
</dbReference>
<dbReference type="FunFam" id="3.30.930.10:FF:000006">
    <property type="entry name" value="Glycine--tRNA ligase alpha subunit"/>
    <property type="match status" value="1"/>
</dbReference>
<dbReference type="Gene3D" id="3.30.930.10">
    <property type="entry name" value="Bira Bifunctional Protein, Domain 2"/>
    <property type="match status" value="1"/>
</dbReference>
<dbReference type="Gene3D" id="1.20.58.180">
    <property type="entry name" value="Class II aaRS and biotin synthetases, domain 2"/>
    <property type="match status" value="1"/>
</dbReference>
<dbReference type="HAMAP" id="MF_00254">
    <property type="entry name" value="Gly_tRNA_synth_alpha"/>
    <property type="match status" value="1"/>
</dbReference>
<dbReference type="InterPro" id="IPR045864">
    <property type="entry name" value="aa-tRNA-synth_II/BPL/LPL"/>
</dbReference>
<dbReference type="InterPro" id="IPR006194">
    <property type="entry name" value="Gly-tRNA-synth_heterodimer"/>
</dbReference>
<dbReference type="InterPro" id="IPR002310">
    <property type="entry name" value="Gly-tRNA_ligase_asu"/>
</dbReference>
<dbReference type="NCBIfam" id="TIGR00388">
    <property type="entry name" value="glyQ"/>
    <property type="match status" value="1"/>
</dbReference>
<dbReference type="NCBIfam" id="NF006827">
    <property type="entry name" value="PRK09348.1"/>
    <property type="match status" value="1"/>
</dbReference>
<dbReference type="PANTHER" id="PTHR30075:SF2">
    <property type="entry name" value="GLYCINE--TRNA LIGASE, CHLOROPLASTIC_MITOCHONDRIAL 2"/>
    <property type="match status" value="1"/>
</dbReference>
<dbReference type="PANTHER" id="PTHR30075">
    <property type="entry name" value="GLYCYL-TRNA SYNTHETASE"/>
    <property type="match status" value="1"/>
</dbReference>
<dbReference type="Pfam" id="PF02091">
    <property type="entry name" value="tRNA-synt_2e"/>
    <property type="match status" value="1"/>
</dbReference>
<dbReference type="PRINTS" id="PR01044">
    <property type="entry name" value="TRNASYNTHGA"/>
</dbReference>
<dbReference type="SUPFAM" id="SSF55681">
    <property type="entry name" value="Class II aaRS and biotin synthetases"/>
    <property type="match status" value="1"/>
</dbReference>
<dbReference type="PROSITE" id="PS50861">
    <property type="entry name" value="AA_TRNA_LIGASE_II_GLYAB"/>
    <property type="match status" value="1"/>
</dbReference>
<proteinExistence type="inferred from homology"/>
<gene>
    <name evidence="1" type="primary">glyQ</name>
    <name type="ordered locus">PMM1165</name>
</gene>
<comment type="catalytic activity">
    <reaction evidence="1">
        <text>tRNA(Gly) + glycine + ATP = glycyl-tRNA(Gly) + AMP + diphosphate</text>
        <dbReference type="Rhea" id="RHEA:16013"/>
        <dbReference type="Rhea" id="RHEA-COMP:9664"/>
        <dbReference type="Rhea" id="RHEA-COMP:9683"/>
        <dbReference type="ChEBI" id="CHEBI:30616"/>
        <dbReference type="ChEBI" id="CHEBI:33019"/>
        <dbReference type="ChEBI" id="CHEBI:57305"/>
        <dbReference type="ChEBI" id="CHEBI:78442"/>
        <dbReference type="ChEBI" id="CHEBI:78522"/>
        <dbReference type="ChEBI" id="CHEBI:456215"/>
        <dbReference type="EC" id="6.1.1.14"/>
    </reaction>
</comment>
<comment type="subunit">
    <text evidence="1">Tetramer of two alpha and two beta subunits.</text>
</comment>
<comment type="subcellular location">
    <subcellularLocation>
        <location evidence="1">Cytoplasm</location>
    </subcellularLocation>
</comment>
<comment type="similarity">
    <text evidence="1">Belongs to the class-II aminoacyl-tRNA synthetase family.</text>
</comment>
<evidence type="ECO:0000255" key="1">
    <source>
        <dbReference type="HAMAP-Rule" id="MF_00254"/>
    </source>
</evidence>